<keyword id="KW-0687">Ribonucleoprotein</keyword>
<keyword id="KW-0689">Ribosomal protein</keyword>
<evidence type="ECO:0000255" key="1">
    <source>
        <dbReference type="HAMAP-Rule" id="MF_00373"/>
    </source>
</evidence>
<evidence type="ECO:0000305" key="2"/>
<accession>A2BWN0</accession>
<reference key="1">
    <citation type="journal article" date="2007" name="PLoS Genet.">
        <title>Patterns and implications of gene gain and loss in the evolution of Prochlorococcus.</title>
        <authorList>
            <person name="Kettler G.C."/>
            <person name="Martiny A.C."/>
            <person name="Huang K."/>
            <person name="Zucker J."/>
            <person name="Coleman M.L."/>
            <person name="Rodrigue S."/>
            <person name="Chen F."/>
            <person name="Lapidus A."/>
            <person name="Ferriera S."/>
            <person name="Johnson J."/>
            <person name="Steglich C."/>
            <person name="Church G.M."/>
            <person name="Richardson P."/>
            <person name="Chisholm S.W."/>
        </authorList>
    </citation>
    <scope>NUCLEOTIDE SEQUENCE [LARGE SCALE GENOMIC DNA]</scope>
    <source>
        <strain>MIT 9515</strain>
    </source>
</reference>
<sequence>MSRVCELTGARANNGMAVSHSHIRTKKLQQVNLQKRRLWWQEGKKWINIKISTKALKSIQKVGLDKVAKTNGVDLNKF</sequence>
<gene>
    <name evidence="1" type="primary">rpmB</name>
    <name evidence="1" type="synonym">rpl28</name>
    <name type="ordered locus">P9515_09841</name>
</gene>
<feature type="chain" id="PRO_1000007305" description="Large ribosomal subunit protein bL28">
    <location>
        <begin position="1"/>
        <end position="78"/>
    </location>
</feature>
<dbReference type="EMBL" id="CP000552">
    <property type="protein sequence ID" value="ABM72191.1"/>
    <property type="molecule type" value="Genomic_DNA"/>
</dbReference>
<dbReference type="RefSeq" id="WP_011820293.1">
    <property type="nucleotide sequence ID" value="NC_008817.1"/>
</dbReference>
<dbReference type="SMR" id="A2BWN0"/>
<dbReference type="STRING" id="167542.P9515_09841"/>
<dbReference type="GeneID" id="60200702"/>
<dbReference type="KEGG" id="pmc:P9515_09841"/>
<dbReference type="eggNOG" id="COG0227">
    <property type="taxonomic scope" value="Bacteria"/>
</dbReference>
<dbReference type="HOGENOM" id="CLU_064548_3_0_3"/>
<dbReference type="OrthoDB" id="9805609at2"/>
<dbReference type="Proteomes" id="UP000001589">
    <property type="component" value="Chromosome"/>
</dbReference>
<dbReference type="GO" id="GO:1990904">
    <property type="term" value="C:ribonucleoprotein complex"/>
    <property type="evidence" value="ECO:0007669"/>
    <property type="project" value="UniProtKB-KW"/>
</dbReference>
<dbReference type="GO" id="GO:0005840">
    <property type="term" value="C:ribosome"/>
    <property type="evidence" value="ECO:0007669"/>
    <property type="project" value="UniProtKB-KW"/>
</dbReference>
<dbReference type="GO" id="GO:0003735">
    <property type="term" value="F:structural constituent of ribosome"/>
    <property type="evidence" value="ECO:0007669"/>
    <property type="project" value="InterPro"/>
</dbReference>
<dbReference type="GO" id="GO:0006412">
    <property type="term" value="P:translation"/>
    <property type="evidence" value="ECO:0007669"/>
    <property type="project" value="UniProtKB-UniRule"/>
</dbReference>
<dbReference type="Gene3D" id="2.30.170.40">
    <property type="entry name" value="Ribosomal protein L28/L24"/>
    <property type="match status" value="1"/>
</dbReference>
<dbReference type="HAMAP" id="MF_00373">
    <property type="entry name" value="Ribosomal_bL28"/>
    <property type="match status" value="1"/>
</dbReference>
<dbReference type="InterPro" id="IPR026569">
    <property type="entry name" value="Ribosomal_bL28"/>
</dbReference>
<dbReference type="InterPro" id="IPR034704">
    <property type="entry name" value="Ribosomal_bL28/bL31-like_sf"/>
</dbReference>
<dbReference type="InterPro" id="IPR001383">
    <property type="entry name" value="Ribosomal_bL28_bact-type"/>
</dbReference>
<dbReference type="InterPro" id="IPR037147">
    <property type="entry name" value="Ribosomal_bL28_sf"/>
</dbReference>
<dbReference type="NCBIfam" id="TIGR00009">
    <property type="entry name" value="L28"/>
    <property type="match status" value="1"/>
</dbReference>
<dbReference type="PANTHER" id="PTHR13528">
    <property type="entry name" value="39S RIBOSOMAL PROTEIN L28, MITOCHONDRIAL"/>
    <property type="match status" value="1"/>
</dbReference>
<dbReference type="PANTHER" id="PTHR13528:SF2">
    <property type="entry name" value="LARGE RIBOSOMAL SUBUNIT PROTEIN BL28M"/>
    <property type="match status" value="1"/>
</dbReference>
<dbReference type="Pfam" id="PF00830">
    <property type="entry name" value="Ribosomal_L28"/>
    <property type="match status" value="1"/>
</dbReference>
<dbReference type="SUPFAM" id="SSF143800">
    <property type="entry name" value="L28p-like"/>
    <property type="match status" value="1"/>
</dbReference>
<name>RL28_PROM5</name>
<organism>
    <name type="scientific">Prochlorococcus marinus (strain MIT 9515)</name>
    <dbReference type="NCBI Taxonomy" id="167542"/>
    <lineage>
        <taxon>Bacteria</taxon>
        <taxon>Bacillati</taxon>
        <taxon>Cyanobacteriota</taxon>
        <taxon>Cyanophyceae</taxon>
        <taxon>Synechococcales</taxon>
        <taxon>Prochlorococcaceae</taxon>
        <taxon>Prochlorococcus</taxon>
    </lineage>
</organism>
<protein>
    <recommendedName>
        <fullName evidence="1">Large ribosomal subunit protein bL28</fullName>
    </recommendedName>
    <alternativeName>
        <fullName evidence="2">50S ribosomal protein L28</fullName>
    </alternativeName>
</protein>
<proteinExistence type="inferred from homology"/>
<comment type="similarity">
    <text evidence="1">Belongs to the bacterial ribosomal protein bL28 family.</text>
</comment>